<organism>
    <name type="scientific">Nephroselmis olivacea</name>
    <name type="common">Green alga</name>
    <dbReference type="NCBI Taxonomy" id="31312"/>
    <lineage>
        <taxon>Eukaryota</taxon>
        <taxon>Viridiplantae</taxon>
        <taxon>Chlorophyta</taxon>
        <taxon>Nephroselmidophyceae</taxon>
        <taxon>Nephroselmidales</taxon>
        <taxon>Nephroselmidaceae</taxon>
        <taxon>Nephroselmis</taxon>
    </lineage>
</organism>
<protein>
    <recommendedName>
        <fullName evidence="1">ATP synthase subunit b, chloroplastic</fullName>
    </recommendedName>
    <alternativeName>
        <fullName evidence="1">ATP synthase F(0) sector subunit b</fullName>
    </alternativeName>
    <alternativeName>
        <fullName evidence="1">ATPase subunit I</fullName>
    </alternativeName>
</protein>
<evidence type="ECO:0000255" key="1">
    <source>
        <dbReference type="HAMAP-Rule" id="MF_01398"/>
    </source>
</evidence>
<dbReference type="EMBL" id="AF137379">
    <property type="protein sequence ID" value="AAD54801.1"/>
    <property type="molecule type" value="Genomic_DNA"/>
</dbReference>
<dbReference type="RefSeq" id="NP_050830.1">
    <property type="nucleotide sequence ID" value="NC_000927.1"/>
</dbReference>
<dbReference type="SMR" id="Q9TL15"/>
<dbReference type="GeneID" id="801914"/>
<dbReference type="GO" id="GO:0009535">
    <property type="term" value="C:chloroplast thylakoid membrane"/>
    <property type="evidence" value="ECO:0007669"/>
    <property type="project" value="UniProtKB-SubCell"/>
</dbReference>
<dbReference type="GO" id="GO:0045259">
    <property type="term" value="C:proton-transporting ATP synthase complex"/>
    <property type="evidence" value="ECO:0007669"/>
    <property type="project" value="UniProtKB-KW"/>
</dbReference>
<dbReference type="GO" id="GO:0005524">
    <property type="term" value="F:ATP binding"/>
    <property type="evidence" value="ECO:0007669"/>
    <property type="project" value="UniProtKB-KW"/>
</dbReference>
<dbReference type="GO" id="GO:0046933">
    <property type="term" value="F:proton-transporting ATP synthase activity, rotational mechanism"/>
    <property type="evidence" value="ECO:0007669"/>
    <property type="project" value="UniProtKB-UniRule"/>
</dbReference>
<dbReference type="CDD" id="cd06503">
    <property type="entry name" value="ATP-synt_Fo_b"/>
    <property type="match status" value="1"/>
</dbReference>
<dbReference type="HAMAP" id="MF_01398">
    <property type="entry name" value="ATP_synth_b_bprime"/>
    <property type="match status" value="1"/>
</dbReference>
<dbReference type="InterPro" id="IPR002146">
    <property type="entry name" value="ATP_synth_b/b'su_bac/chlpt"/>
</dbReference>
<dbReference type="PANTHER" id="PTHR34264">
    <property type="entry name" value="ATP SYNTHASE SUBUNIT B, CHLOROPLASTIC"/>
    <property type="match status" value="1"/>
</dbReference>
<dbReference type="PANTHER" id="PTHR34264:SF3">
    <property type="entry name" value="ATP SYNTHASE SUBUNIT B, CHLOROPLASTIC"/>
    <property type="match status" value="1"/>
</dbReference>
<dbReference type="Pfam" id="PF00430">
    <property type="entry name" value="ATP-synt_B"/>
    <property type="match status" value="1"/>
</dbReference>
<comment type="function">
    <text evidence="1">F(1)F(0) ATP synthase produces ATP from ADP in the presence of a proton or sodium gradient. F-type ATPases consist of two structural domains, F(1) containing the extramembraneous catalytic core and F(0) containing the membrane proton channel, linked together by a central stalk and a peripheral stalk. During catalysis, ATP synthesis in the catalytic domain of F(1) is coupled via a rotary mechanism of the central stalk subunits to proton translocation.</text>
</comment>
<comment type="function">
    <text evidence="1">Component of the F(0) channel, it forms part of the peripheral stalk, linking F(1) to F(0).</text>
</comment>
<comment type="subunit">
    <text evidence="1">F-type ATPases have 2 components, F(1) - the catalytic core - and F(0) - the membrane proton channel. F(1) has five subunits: alpha(3), beta(3), gamma(1), delta(1), epsilon(1). F(0) has four main subunits: a(1), b(1), b'(1) and c(10-14). The alpha and beta chains form an alternating ring which encloses part of the gamma chain. F(1) is attached to F(0) by a central stalk formed by the gamma and epsilon chains, while a peripheral stalk is formed by the delta, b and b' chains.</text>
</comment>
<comment type="subcellular location">
    <subcellularLocation>
        <location evidence="1">Plastid</location>
        <location evidence="1">Chloroplast thylakoid membrane</location>
        <topology evidence="1">Single-pass membrane protein</topology>
    </subcellularLocation>
</comment>
<comment type="miscellaneous">
    <text>In plastids the F-type ATPase is also known as CF(1)CF(0).</text>
</comment>
<comment type="similarity">
    <text evidence="1">Belongs to the ATPase B chain family.</text>
</comment>
<geneLocation type="chloroplast"/>
<proteinExistence type="inferred from homology"/>
<feature type="chain" id="PRO_0000082414" description="ATP synthase subunit b, chloroplastic">
    <location>
        <begin position="1"/>
        <end position="176"/>
    </location>
</feature>
<feature type="transmembrane region" description="Helical" evidence="1">
    <location>
        <begin position="27"/>
        <end position="49"/>
    </location>
</feature>
<keyword id="KW-0066">ATP synthesis</keyword>
<keyword id="KW-0067">ATP-binding</keyword>
<keyword id="KW-0138">CF(0)</keyword>
<keyword id="KW-0150">Chloroplast</keyword>
<keyword id="KW-0375">Hydrogen ion transport</keyword>
<keyword id="KW-0406">Ion transport</keyword>
<keyword id="KW-0472">Membrane</keyword>
<keyword id="KW-0547">Nucleotide-binding</keyword>
<keyword id="KW-0934">Plastid</keyword>
<keyword id="KW-0793">Thylakoid</keyword>
<keyword id="KW-0812">Transmembrane</keyword>
<keyword id="KW-1133">Transmembrane helix</keyword>
<keyword id="KW-0813">Transport</keyword>
<reference key="1">
    <citation type="journal article" date="1999" name="Proc. Natl. Acad. Sci. U.S.A.">
        <title>The complete chloroplast DNA sequence of the green alga Nephroselmis olivacea: insights into the architecture of ancestral chloroplast genomes.</title>
        <authorList>
            <person name="Turmel M."/>
            <person name="Otis C."/>
            <person name="Lemieux C."/>
        </authorList>
    </citation>
    <scope>NUCLEOTIDE SEQUENCE [LARGE SCALE GENOMIC DNA]</scope>
    <source>
        <strain>NIES-484 / S-N-5-8</strain>
    </source>
</reference>
<accession>Q9TL15</accession>
<name>ATPF_NEPOL</name>
<sequence length="176" mass="20113">MFHFLALTPLAHSEGFGLNTNILETNILNLAAVFALLAYVGTDFVSSLLKTRKESILKSLRDADERYQDAVNQLKQALQELETARTNAAEIRRQSEINAEAIRQRLELLTQEEMARLEEAKETIIKLEEEKAVAEVCTKVISMALVRAEKKIISSMDEAMHRRVMDMYLNLLREVY</sequence>
<gene>
    <name evidence="1" type="primary">atpF</name>
</gene>